<organismHost>
    <name type="scientific">Acanthamoeba polyphaga</name>
    <name type="common">Amoeba</name>
    <dbReference type="NCBI Taxonomy" id="5757"/>
</organismHost>
<proteinExistence type="inferred from homology"/>
<gene>
    <name type="ordered locus">MIMI_L272</name>
</gene>
<reference key="1">
    <citation type="journal article" date="2004" name="Science">
        <title>The 1.2-megabase genome sequence of Mimivirus.</title>
        <authorList>
            <person name="Raoult D."/>
            <person name="Audic S."/>
            <person name="Robert C."/>
            <person name="Abergel C."/>
            <person name="Renesto P."/>
            <person name="Ogata H."/>
            <person name="La Scola B."/>
            <person name="Susan M."/>
            <person name="Claverie J.-M."/>
        </authorList>
    </citation>
    <scope>NUCLEOTIDE SEQUENCE [LARGE SCALE GENOMIC DNA]</scope>
    <source>
        <strain>Rowbotham-Bradford</strain>
    </source>
</reference>
<protein>
    <recommendedName>
        <fullName>Putative BTB/POZ domain-containing protein L272</fullName>
    </recommendedName>
</protein>
<sequence length="762" mass="88029">MDFNKLYVLAQNNLFTDITIILKDESNEITLNLHKNIIYSSCIFFEKLLTSFKEKESSKIILNVPNAIIVNDIIWDFYGQKIKSHNYPEWKYFIESYKCFDYFGMNTDKKKLYKLIVEPDGFDELMDFIDLIGYDENAIEVIFNNLPDDYDLSKFSHELLTEMLSMYKKNLVQIITRNEIIVLNDFFDGTIRSTEHCINSPEVILFCASNASKIVTFDGHNIRILESNNSILLSDDSTVSDAGTILHISHSQNKNVLVILYEYRIDVWDVLINKLIASFRVPFIKKLSCSYDGSQLVYVDNNNNMIVKNILSEEIISEINLQNLPEISNNFCIPELILETNTQDLSEIPNNLYTLELKSEPDQSIDFIKSNFQHNLDNLDDLNNLDNSDDLDNSNDLNDSNDLDDSDDSNDYNNLNYDLNNLEIICSSNNEIFENVSTHYCIDVNDCNHIDNINSLNLQSPIQDLSDSLSPIDYIDSSNLQSPVQDLSDSQSSTDWIVSPNTQSPVYYLSKLDGSINGEKLSDALSIENDSISDNSDNLNNSDNSDDLDNPDNSDNLDNSDYLLEYLVNTDKTNYMFNLTYSIHTDKTNKRFNLENPYEQFNFINKFCLLYINNKVIYFIDIIDKKIIHKETCRRNIVNMRCSPTGDSIAIIDSEYIVYIYKLVTDSNGFLCYPIVDYCILVRDLFLPTKIEYSSNGRYLVFDDDGLSINLYDIEQLEMTNEFELFCDSKIIVDITFSENYCDELINRLNNALKKIEQKYPN</sequence>
<feature type="chain" id="PRO_0000186232" description="Putative BTB/POZ domain-containing protein L272">
    <location>
        <begin position="1"/>
        <end position="762"/>
    </location>
</feature>
<feature type="domain" description="BTB">
    <location>
        <begin position="16"/>
        <end position="86"/>
    </location>
</feature>
<feature type="region of interest" description="Disordered" evidence="2">
    <location>
        <begin position="390"/>
        <end position="411"/>
    </location>
</feature>
<feature type="region of interest" description="Disordered" evidence="2">
    <location>
        <begin position="532"/>
        <end position="556"/>
    </location>
</feature>
<feature type="coiled-coil region" evidence="1">
    <location>
        <begin position="737"/>
        <end position="762"/>
    </location>
</feature>
<feature type="compositionally biased region" description="Acidic residues" evidence="2">
    <location>
        <begin position="390"/>
        <end position="410"/>
    </location>
</feature>
<feature type="compositionally biased region" description="Low complexity" evidence="2">
    <location>
        <begin position="532"/>
        <end position="543"/>
    </location>
</feature>
<keyword id="KW-0175">Coiled coil</keyword>
<keyword id="KW-1185">Reference proteome</keyword>
<accession>Q5UPV0</accession>
<comment type="similarity">
    <text evidence="3">Belongs to the mimivirus BTB/WD family.</text>
</comment>
<evidence type="ECO:0000255" key="1"/>
<evidence type="ECO:0000256" key="2">
    <source>
        <dbReference type="SAM" id="MobiDB-lite"/>
    </source>
</evidence>
<evidence type="ECO:0000305" key="3"/>
<dbReference type="EMBL" id="AY653733">
    <property type="protein sequence ID" value="AAV50544.1"/>
    <property type="molecule type" value="Genomic_DNA"/>
</dbReference>
<dbReference type="KEGG" id="vg:9924882"/>
<dbReference type="OrthoDB" id="33192at10239"/>
<dbReference type="Proteomes" id="UP000001134">
    <property type="component" value="Genome"/>
</dbReference>
<dbReference type="CDD" id="cd18186">
    <property type="entry name" value="BTB_POZ_ZBTB_KLHL-like"/>
    <property type="match status" value="1"/>
</dbReference>
<dbReference type="Gene3D" id="3.30.710.10">
    <property type="entry name" value="Potassium Channel Kv1.1, Chain A"/>
    <property type="match status" value="1"/>
</dbReference>
<dbReference type="InterPro" id="IPR000210">
    <property type="entry name" value="BTB/POZ_dom"/>
</dbReference>
<dbReference type="InterPro" id="IPR011047">
    <property type="entry name" value="Quinoprotein_ADH-like_sf"/>
</dbReference>
<dbReference type="InterPro" id="IPR011333">
    <property type="entry name" value="SKP1/BTB/POZ_sf"/>
</dbReference>
<dbReference type="Pfam" id="PF00651">
    <property type="entry name" value="BTB"/>
    <property type="match status" value="1"/>
</dbReference>
<dbReference type="SUPFAM" id="SSF54695">
    <property type="entry name" value="POZ domain"/>
    <property type="match status" value="1"/>
</dbReference>
<dbReference type="SUPFAM" id="SSF50998">
    <property type="entry name" value="Quinoprotein alcohol dehydrogenase-like"/>
    <property type="match status" value="1"/>
</dbReference>
<name>YL272_MIMIV</name>
<organism>
    <name type="scientific">Acanthamoeba polyphaga mimivirus</name>
    <name type="common">APMV</name>
    <dbReference type="NCBI Taxonomy" id="212035"/>
    <lineage>
        <taxon>Viruses</taxon>
        <taxon>Varidnaviria</taxon>
        <taxon>Bamfordvirae</taxon>
        <taxon>Nucleocytoviricota</taxon>
        <taxon>Megaviricetes</taxon>
        <taxon>Imitervirales</taxon>
        <taxon>Mimiviridae</taxon>
        <taxon>Megamimivirinae</taxon>
        <taxon>Mimivirus</taxon>
        <taxon>Mimivirus bradfordmassiliense</taxon>
    </lineage>
</organism>